<comment type="function">
    <text evidence="1">Catalyzes the enolization of 2,3-diketo-5-methylthiopentyl-1-phosphate (DK-MTP-1-P) into 2-hydroxy-3-keto-5-methylthiopentenyl-1-phosphate (HK-MTPenyl-1-P).</text>
</comment>
<comment type="catalytic activity">
    <reaction evidence="1">
        <text>5-methylsulfanyl-2,3-dioxopentyl phosphate = 2-hydroxy-5-methylsulfanyl-3-oxopent-1-enyl phosphate</text>
        <dbReference type="Rhea" id="RHEA:18769"/>
        <dbReference type="ChEBI" id="CHEBI:58828"/>
        <dbReference type="ChEBI" id="CHEBI:59505"/>
        <dbReference type="EC" id="5.3.2.5"/>
    </reaction>
</comment>
<comment type="cofactor">
    <cofactor evidence="1">
        <name>Mg(2+)</name>
        <dbReference type="ChEBI" id="CHEBI:18420"/>
    </cofactor>
    <text evidence="1">Binds 1 Mg(2+) ion per subunit.</text>
</comment>
<comment type="pathway">
    <text evidence="1">Amino-acid biosynthesis; L-methionine biosynthesis via salvage pathway; L-methionine from S-methyl-5-thio-alpha-D-ribose 1-phosphate: step 3/6.</text>
</comment>
<comment type="subunit">
    <text evidence="1">Homodimer.</text>
</comment>
<comment type="miscellaneous">
    <text evidence="1">Has no RuBP-carboxylation activity.</text>
</comment>
<comment type="similarity">
    <text evidence="1">Belongs to the RuBisCO large chain family. Type IV subfamily.</text>
</comment>
<sequence>MSGIIATYLIHDDSHNLEKKAEQIALGLTIGSWTHLPQLLQEQLKQHKGNVIHIVELAEHEHTNSYLRKKVKRGIIKIEYPLLNFSPDLPAILTTTFGKLSLDGEVKLIDLTFSDELKKHFPGPKFGIDGIRNLLQVHDRPLLMSIFKGMIGRNIGYLKTQLRDQAIGGVDIVKDDEILFENALTPLTKRIVSGKEVLQSVYETYGHKTLYAVNLTGRTFDLKENAKRAVQAGADILLFNVFAYGLDVLQSLAEDDEIPVPIMAHPAVSGAYSASKLYGISSPLLLGKLLRYAGADFSLFPSPYGSVALEKEEALAISKYLTEDDAFFKKSFSVPSAGIHPGFVPFIVRDFGKDVVINAGGGIHGHPNGAQGGGKAFRTAIEATLQNKPLHEVDDINLHSALQIWGNPSHEVKL</sequence>
<name>MTNW_BACC2</name>
<proteinExistence type="inferred from homology"/>
<accession>B7IWE8</accession>
<dbReference type="EC" id="5.3.2.5" evidence="1"/>
<dbReference type="EMBL" id="CP001186">
    <property type="protein sequence ID" value="ACK96038.1"/>
    <property type="molecule type" value="Genomic_DNA"/>
</dbReference>
<dbReference type="RefSeq" id="WP_000014207.1">
    <property type="nucleotide sequence ID" value="NC_011772.1"/>
</dbReference>
<dbReference type="SMR" id="B7IWE8"/>
<dbReference type="KEGG" id="bcg:BCG9842_B1093"/>
<dbReference type="HOGENOM" id="CLU_031450_3_1_9"/>
<dbReference type="UniPathway" id="UPA00904">
    <property type="reaction ID" value="UER00876"/>
</dbReference>
<dbReference type="Proteomes" id="UP000006744">
    <property type="component" value="Chromosome"/>
</dbReference>
<dbReference type="GO" id="GO:0043715">
    <property type="term" value="F:2,3-diketo-5-methylthiopentyl-1-phosphate enolase activity"/>
    <property type="evidence" value="ECO:0007669"/>
    <property type="project" value="UniProtKB-UniRule"/>
</dbReference>
<dbReference type="GO" id="GO:0000287">
    <property type="term" value="F:magnesium ion binding"/>
    <property type="evidence" value="ECO:0007669"/>
    <property type="project" value="UniProtKB-UniRule"/>
</dbReference>
<dbReference type="GO" id="GO:0016984">
    <property type="term" value="F:ribulose-bisphosphate carboxylase activity"/>
    <property type="evidence" value="ECO:0007669"/>
    <property type="project" value="InterPro"/>
</dbReference>
<dbReference type="GO" id="GO:0015977">
    <property type="term" value="P:carbon fixation"/>
    <property type="evidence" value="ECO:0007669"/>
    <property type="project" value="InterPro"/>
</dbReference>
<dbReference type="GO" id="GO:0019509">
    <property type="term" value="P:L-methionine salvage from methylthioadenosine"/>
    <property type="evidence" value="ECO:0007669"/>
    <property type="project" value="UniProtKB-UniRule"/>
</dbReference>
<dbReference type="CDD" id="cd08209">
    <property type="entry name" value="RLP_DK-MTP-1-P-enolase"/>
    <property type="match status" value="1"/>
</dbReference>
<dbReference type="FunFam" id="3.20.20.110:FF:000002">
    <property type="entry name" value="2,3-diketo-5-methylthiopentyl-1-phosphate enolase"/>
    <property type="match status" value="1"/>
</dbReference>
<dbReference type="Gene3D" id="3.20.20.110">
    <property type="entry name" value="Ribulose bisphosphate carboxylase, large subunit, C-terminal domain"/>
    <property type="match status" value="1"/>
</dbReference>
<dbReference type="Gene3D" id="3.30.70.150">
    <property type="entry name" value="RuBisCO large subunit, N-terminal domain"/>
    <property type="match status" value="1"/>
</dbReference>
<dbReference type="HAMAP" id="MF_01679">
    <property type="entry name" value="Salvage_MtnW"/>
    <property type="match status" value="1"/>
</dbReference>
<dbReference type="InterPro" id="IPR017717">
    <property type="entry name" value="Diketo-Methiopentyl-P_enolase"/>
</dbReference>
<dbReference type="InterPro" id="IPR033966">
    <property type="entry name" value="RuBisCO"/>
</dbReference>
<dbReference type="InterPro" id="IPR000685">
    <property type="entry name" value="RuBisCO_lsu_C"/>
</dbReference>
<dbReference type="InterPro" id="IPR036376">
    <property type="entry name" value="RuBisCO_lsu_C_sf"/>
</dbReference>
<dbReference type="InterPro" id="IPR017443">
    <property type="entry name" value="RuBisCO_lsu_fd_N"/>
</dbReference>
<dbReference type="InterPro" id="IPR036422">
    <property type="entry name" value="RuBisCO_lsu_N_sf"/>
</dbReference>
<dbReference type="NCBIfam" id="NF007095">
    <property type="entry name" value="PRK09549.1"/>
    <property type="match status" value="1"/>
</dbReference>
<dbReference type="NCBIfam" id="TIGR03332">
    <property type="entry name" value="salvage_mtnW"/>
    <property type="match status" value="1"/>
</dbReference>
<dbReference type="PANTHER" id="PTHR42704">
    <property type="entry name" value="RIBULOSE BISPHOSPHATE CARBOXYLASE"/>
    <property type="match status" value="1"/>
</dbReference>
<dbReference type="PANTHER" id="PTHR42704:SF17">
    <property type="entry name" value="RIBULOSE BISPHOSPHATE CARBOXYLASE LARGE CHAIN"/>
    <property type="match status" value="1"/>
</dbReference>
<dbReference type="Pfam" id="PF00016">
    <property type="entry name" value="RuBisCO_large"/>
    <property type="match status" value="1"/>
</dbReference>
<dbReference type="Pfam" id="PF02788">
    <property type="entry name" value="RuBisCO_large_N"/>
    <property type="match status" value="1"/>
</dbReference>
<dbReference type="SFLD" id="SFLDF00157">
    <property type="entry name" value="2_3-diketo-5-methylthiopentyl"/>
    <property type="match status" value="1"/>
</dbReference>
<dbReference type="SFLD" id="SFLDS00014">
    <property type="entry name" value="RuBisCO"/>
    <property type="match status" value="1"/>
</dbReference>
<dbReference type="SUPFAM" id="SSF51649">
    <property type="entry name" value="RuBisCo, C-terminal domain"/>
    <property type="match status" value="1"/>
</dbReference>
<dbReference type="SUPFAM" id="SSF54966">
    <property type="entry name" value="RuBisCO, large subunit, small (N-terminal) domain"/>
    <property type="match status" value="1"/>
</dbReference>
<evidence type="ECO:0000255" key="1">
    <source>
        <dbReference type="HAMAP-Rule" id="MF_01679"/>
    </source>
</evidence>
<feature type="chain" id="PRO_1000187376" description="2,3-diketo-5-methylthiopentyl-1-phosphate enolase">
    <location>
        <begin position="1"/>
        <end position="414"/>
    </location>
</feature>
<feature type="active site" description="Proton acceptor" evidence="1">
    <location>
        <position position="99"/>
    </location>
</feature>
<feature type="binding site" evidence="1">
    <location>
        <position position="148"/>
    </location>
    <ligand>
        <name>substrate</name>
    </ligand>
</feature>
<feature type="binding site" evidence="1">
    <location>
        <begin position="174"/>
        <end position="177"/>
    </location>
    <ligand>
        <name>substrate</name>
    </ligand>
</feature>
<feature type="binding site" description="via carbamate group" evidence="1">
    <location>
        <position position="174"/>
    </location>
    <ligand>
        <name>Mg(2+)</name>
        <dbReference type="ChEBI" id="CHEBI:18420"/>
    </ligand>
</feature>
<feature type="binding site" evidence="1">
    <location>
        <position position="176"/>
    </location>
    <ligand>
        <name>Mg(2+)</name>
        <dbReference type="ChEBI" id="CHEBI:18420"/>
    </ligand>
</feature>
<feature type="binding site" evidence="1">
    <location>
        <position position="177"/>
    </location>
    <ligand>
        <name>Mg(2+)</name>
        <dbReference type="ChEBI" id="CHEBI:18420"/>
    </ligand>
</feature>
<feature type="binding site" evidence="1">
    <location>
        <position position="265"/>
    </location>
    <ligand>
        <name>substrate</name>
    </ligand>
</feature>
<feature type="binding site" evidence="1">
    <location>
        <position position="338"/>
    </location>
    <ligand>
        <name>substrate</name>
    </ligand>
</feature>
<feature type="binding site" evidence="1">
    <location>
        <begin position="360"/>
        <end position="361"/>
    </location>
    <ligand>
        <name>substrate</name>
    </ligand>
</feature>
<feature type="modified residue" description="N6-carboxylysine" evidence="1">
    <location>
        <position position="174"/>
    </location>
</feature>
<reference key="1">
    <citation type="submission" date="2008-10" db="EMBL/GenBank/DDBJ databases">
        <title>Genome sequence of Bacillus cereus G9842.</title>
        <authorList>
            <person name="Dodson R.J."/>
            <person name="Durkin A.S."/>
            <person name="Rosovitz M.J."/>
            <person name="Rasko D.A."/>
            <person name="Hoffmaster A."/>
            <person name="Ravel J."/>
            <person name="Sutton G."/>
        </authorList>
    </citation>
    <scope>NUCLEOTIDE SEQUENCE [LARGE SCALE GENOMIC DNA]</scope>
    <source>
        <strain>G9842</strain>
    </source>
</reference>
<protein>
    <recommendedName>
        <fullName evidence="1">2,3-diketo-5-methylthiopentyl-1-phosphate enolase</fullName>
        <shortName evidence="1">DK-MTP-1-P enolase</shortName>
        <ecNumber evidence="1">5.3.2.5</ecNumber>
    </recommendedName>
    <alternativeName>
        <fullName evidence="1">RuBisCO-like protein</fullName>
        <shortName evidence="1">RLP</shortName>
    </alternativeName>
</protein>
<keyword id="KW-0028">Amino-acid biosynthesis</keyword>
<keyword id="KW-0413">Isomerase</keyword>
<keyword id="KW-0460">Magnesium</keyword>
<keyword id="KW-0479">Metal-binding</keyword>
<keyword id="KW-0486">Methionine biosynthesis</keyword>
<gene>
    <name evidence="1" type="primary">mtnW</name>
    <name type="ordered locus">BCG9842_B1093</name>
</gene>
<organism>
    <name type="scientific">Bacillus cereus (strain G9842)</name>
    <dbReference type="NCBI Taxonomy" id="405531"/>
    <lineage>
        <taxon>Bacteria</taxon>
        <taxon>Bacillati</taxon>
        <taxon>Bacillota</taxon>
        <taxon>Bacilli</taxon>
        <taxon>Bacillales</taxon>
        <taxon>Bacillaceae</taxon>
        <taxon>Bacillus</taxon>
        <taxon>Bacillus cereus group</taxon>
    </lineage>
</organism>